<accession>O77680</accession>
<feature type="chain" id="PRO_0000069374" description="D(1A) dopamine receptor">
    <location>
        <begin position="1"/>
        <end position="446"/>
    </location>
</feature>
<feature type="topological domain" description="Extracellular" evidence="4">
    <location>
        <begin position="1"/>
        <end position="23"/>
    </location>
</feature>
<feature type="transmembrane region" description="Helical; Name=1" evidence="4">
    <location>
        <begin position="24"/>
        <end position="49"/>
    </location>
</feature>
<feature type="topological domain" description="Cytoplasmic" evidence="4">
    <location>
        <begin position="50"/>
        <end position="60"/>
    </location>
</feature>
<feature type="transmembrane region" description="Helical; Name=2" evidence="4">
    <location>
        <begin position="61"/>
        <end position="87"/>
    </location>
</feature>
<feature type="topological domain" description="Extracellular" evidence="4">
    <location>
        <begin position="88"/>
        <end position="96"/>
    </location>
</feature>
<feature type="transmembrane region" description="Helical; Name=3" evidence="4">
    <location>
        <begin position="97"/>
        <end position="119"/>
    </location>
</feature>
<feature type="topological domain" description="Cytoplasmic" evidence="4">
    <location>
        <begin position="120"/>
        <end position="138"/>
    </location>
</feature>
<feature type="transmembrane region" description="Helical; Name=4" evidence="4">
    <location>
        <begin position="139"/>
        <end position="163"/>
    </location>
</feature>
<feature type="topological domain" description="Extracellular" evidence="4">
    <location>
        <begin position="164"/>
        <end position="192"/>
    </location>
</feature>
<feature type="transmembrane region" description="Helical; Name=5" evidence="4">
    <location>
        <begin position="193"/>
        <end position="218"/>
    </location>
</feature>
<feature type="topological domain" description="Cytoplasmic" evidence="4">
    <location>
        <begin position="219"/>
        <end position="272"/>
    </location>
</feature>
<feature type="transmembrane region" description="Helical; Name=6" evidence="4">
    <location>
        <begin position="273"/>
        <end position="299"/>
    </location>
</feature>
<feature type="topological domain" description="Extracellular" evidence="4">
    <location>
        <begin position="300"/>
        <end position="312"/>
    </location>
</feature>
<feature type="transmembrane region" description="Helical; Name=7" evidence="4">
    <location>
        <begin position="313"/>
        <end position="337"/>
    </location>
</feature>
<feature type="topological domain" description="Cytoplasmic" evidence="4">
    <location>
        <begin position="338"/>
        <end position="446"/>
    </location>
</feature>
<feature type="lipid moiety-binding region" description="S-palmitoyl cysteine" evidence="2">
    <location>
        <position position="347"/>
    </location>
</feature>
<feature type="lipid moiety-binding region" description="S-palmitoyl cysteine" evidence="2">
    <location>
        <position position="351"/>
    </location>
</feature>
<feature type="glycosylation site" description="N-linked (GlcNAc...) asparagine" evidence="4">
    <location>
        <position position="5"/>
    </location>
</feature>
<feature type="glycosylation site" description="N-linked (GlcNAc...) asparagine" evidence="4">
    <location>
        <position position="175"/>
    </location>
</feature>
<feature type="disulfide bond" evidence="5">
    <location>
        <begin position="96"/>
        <end position="186"/>
    </location>
</feature>
<comment type="function">
    <text>Dopamine receptor whose activity is mediated by G proteins which activate adenylyl cyclase.</text>
</comment>
<comment type="subunit">
    <text evidence="1 3">Interacts with DNAJC14 via its C-terminus (By similarity). Interacts with DRD2 (By similarity). Interacts with DORIP1 (By similarity).</text>
</comment>
<comment type="subcellular location">
    <subcellularLocation>
        <location evidence="1">Cell membrane</location>
        <topology evidence="1">Multi-pass membrane protein</topology>
    </subcellularLocation>
    <subcellularLocation>
        <location evidence="1">Endoplasmic reticulum membrane</location>
        <topology evidence="1">Multi-pass membrane protein</topology>
    </subcellularLocation>
    <subcellularLocation>
        <location evidence="2">Cell projection</location>
        <location evidence="2">Cilium membrane</location>
        <topology evidence="4">Multi-pass membrane protein</topology>
    </subcellularLocation>
    <subcellularLocation>
        <location evidence="3">Cell projection</location>
        <location evidence="3">Dendrite</location>
    </subcellularLocation>
    <subcellularLocation>
        <location evidence="3">Cell projection</location>
        <location evidence="3">Dendritic spine</location>
    </subcellularLocation>
    <text evidence="1">Transport from the endoplasmic reticulum to the cell surface is regulated by interaction with DNAJC14.</text>
</comment>
<comment type="similarity">
    <text evidence="5">Belongs to the G-protein coupled receptor 1 family.</text>
</comment>
<dbReference type="EMBL" id="AF077862">
    <property type="protein sequence ID" value="AAC27328.1"/>
    <property type="molecule type" value="Genomic_DNA"/>
</dbReference>
<dbReference type="RefSeq" id="NP_001193904.1">
    <property type="nucleotide sequence ID" value="NM_001206975.1"/>
</dbReference>
<dbReference type="RefSeq" id="XP_014996937.1">
    <property type="nucleotide sequence ID" value="XM_015141451.2"/>
</dbReference>
<dbReference type="SMR" id="O77680"/>
<dbReference type="FunCoup" id="O77680">
    <property type="interactions" value="1260"/>
</dbReference>
<dbReference type="STRING" id="9544.ENSMMUP00000006816"/>
<dbReference type="BindingDB" id="O77680"/>
<dbReference type="GlyCosmos" id="O77680">
    <property type="glycosylation" value="2 sites, No reported glycans"/>
</dbReference>
<dbReference type="PaxDb" id="9544-ENSMMUP00000006816"/>
<dbReference type="Ensembl" id="ENSMMUT00000007253.4">
    <property type="protein sequence ID" value="ENSMMUP00000006816.2"/>
    <property type="gene ID" value="ENSMMUG00000005147.4"/>
</dbReference>
<dbReference type="GeneID" id="697796"/>
<dbReference type="KEGG" id="mcc:697796"/>
<dbReference type="CTD" id="1812"/>
<dbReference type="VEuPathDB" id="HostDB:ENSMMUG00000005147"/>
<dbReference type="VGNC" id="VGNC:71988">
    <property type="gene designation" value="DRD1"/>
</dbReference>
<dbReference type="eggNOG" id="KOG3656">
    <property type="taxonomic scope" value="Eukaryota"/>
</dbReference>
<dbReference type="GeneTree" id="ENSGT00940000155857"/>
<dbReference type="HOGENOM" id="CLU_009579_11_0_1"/>
<dbReference type="InParanoid" id="O77680"/>
<dbReference type="OMA" id="THNGQHP"/>
<dbReference type="OrthoDB" id="6021915at2759"/>
<dbReference type="TreeFam" id="TF325181"/>
<dbReference type="Proteomes" id="UP000006718">
    <property type="component" value="Chromosome 6"/>
</dbReference>
<dbReference type="Bgee" id="ENSMMUG00000005147">
    <property type="expression patterns" value="Expressed in dorsolateral prefrontal cortex and 10 other cell types or tissues"/>
</dbReference>
<dbReference type="ExpressionAtlas" id="O77680">
    <property type="expression patterns" value="baseline"/>
</dbReference>
<dbReference type="GO" id="GO:0060170">
    <property type="term" value="C:ciliary membrane"/>
    <property type="evidence" value="ECO:0007669"/>
    <property type="project" value="UniProtKB-SubCell"/>
</dbReference>
<dbReference type="GO" id="GO:0043197">
    <property type="term" value="C:dendritic spine"/>
    <property type="evidence" value="ECO:0000250"/>
    <property type="project" value="UniProtKB"/>
</dbReference>
<dbReference type="GO" id="GO:0005789">
    <property type="term" value="C:endoplasmic reticulum membrane"/>
    <property type="evidence" value="ECO:0007669"/>
    <property type="project" value="UniProtKB-SubCell"/>
</dbReference>
<dbReference type="GO" id="GO:0097648">
    <property type="term" value="C:G protein-coupled receptor complex"/>
    <property type="evidence" value="ECO:0007669"/>
    <property type="project" value="Ensembl"/>
</dbReference>
<dbReference type="GO" id="GO:0097730">
    <property type="term" value="C:non-motile cilium"/>
    <property type="evidence" value="ECO:0007669"/>
    <property type="project" value="Ensembl"/>
</dbReference>
<dbReference type="GO" id="GO:0005886">
    <property type="term" value="C:plasma membrane"/>
    <property type="evidence" value="ECO:0000318"/>
    <property type="project" value="GO_Central"/>
</dbReference>
<dbReference type="GO" id="GO:1990763">
    <property type="term" value="F:arrestin family protein binding"/>
    <property type="evidence" value="ECO:0007669"/>
    <property type="project" value="Ensembl"/>
</dbReference>
<dbReference type="GO" id="GO:0035240">
    <property type="term" value="F:dopamine binding"/>
    <property type="evidence" value="ECO:0007669"/>
    <property type="project" value="Ensembl"/>
</dbReference>
<dbReference type="GO" id="GO:0001588">
    <property type="term" value="F:dopamine neurotransmitter receptor activity, coupled via Gs"/>
    <property type="evidence" value="ECO:0000318"/>
    <property type="project" value="GO_Central"/>
</dbReference>
<dbReference type="GO" id="GO:0004930">
    <property type="term" value="F:G protein-coupled receptor activity"/>
    <property type="evidence" value="ECO:0000318"/>
    <property type="project" value="GO_Central"/>
</dbReference>
<dbReference type="GO" id="GO:0001965">
    <property type="term" value="F:G-protein alpha-subunit binding"/>
    <property type="evidence" value="ECO:0007669"/>
    <property type="project" value="Ensembl"/>
</dbReference>
<dbReference type="GO" id="GO:0032795">
    <property type="term" value="F:heterotrimeric G-protein binding"/>
    <property type="evidence" value="ECO:0007669"/>
    <property type="project" value="Ensembl"/>
</dbReference>
<dbReference type="GO" id="GO:0071880">
    <property type="term" value="P:adenylate cyclase-activating adrenergic receptor signaling pathway"/>
    <property type="evidence" value="ECO:0000318"/>
    <property type="project" value="GO_Central"/>
</dbReference>
<dbReference type="GO" id="GO:0007191">
    <property type="term" value="P:adenylate cyclase-activating dopamine receptor signaling pathway"/>
    <property type="evidence" value="ECO:0007669"/>
    <property type="project" value="Ensembl"/>
</dbReference>
<dbReference type="GO" id="GO:0007212">
    <property type="term" value="P:G protein-coupled dopamine receptor signaling pathway"/>
    <property type="evidence" value="ECO:0000318"/>
    <property type="project" value="GO_Central"/>
</dbReference>
<dbReference type="GO" id="GO:0007187">
    <property type="term" value="P:G protein-coupled receptor signaling pathway, coupled to cyclic nucleotide second messenger"/>
    <property type="evidence" value="ECO:0007669"/>
    <property type="project" value="Ensembl"/>
</dbReference>
<dbReference type="GO" id="GO:0060158">
    <property type="term" value="P:phospholipase C-activating dopamine receptor signaling pathway"/>
    <property type="evidence" value="ECO:0007669"/>
    <property type="project" value="Ensembl"/>
</dbReference>
<dbReference type="GO" id="GO:0043410">
    <property type="term" value="P:positive regulation of MAPK cascade"/>
    <property type="evidence" value="ECO:0000318"/>
    <property type="project" value="GO_Central"/>
</dbReference>
<dbReference type="GO" id="GO:0051281">
    <property type="term" value="P:positive regulation of release of sequestered calcium ion into cytosol"/>
    <property type="evidence" value="ECO:0007669"/>
    <property type="project" value="Ensembl"/>
</dbReference>
<dbReference type="GO" id="GO:0042311">
    <property type="term" value="P:vasodilation"/>
    <property type="evidence" value="ECO:0007669"/>
    <property type="project" value="InterPro"/>
</dbReference>
<dbReference type="CDD" id="cd15320">
    <property type="entry name" value="7tmA_D1A_dopamine_R"/>
    <property type="match status" value="1"/>
</dbReference>
<dbReference type="FunFam" id="1.20.1070.10:FF:000045">
    <property type="entry name" value="D(1A) dopamine receptor"/>
    <property type="match status" value="1"/>
</dbReference>
<dbReference type="Gene3D" id="1.20.1070.10">
    <property type="entry name" value="Rhodopsin 7-helix transmembrane proteins"/>
    <property type="match status" value="1"/>
</dbReference>
<dbReference type="InterPro" id="IPR001413">
    <property type="entry name" value="Dopamine_D1_rcpt"/>
</dbReference>
<dbReference type="InterPro" id="IPR000929">
    <property type="entry name" value="Dopamine_rcpt"/>
</dbReference>
<dbReference type="InterPro" id="IPR000276">
    <property type="entry name" value="GPCR_Rhodpsn"/>
</dbReference>
<dbReference type="InterPro" id="IPR017452">
    <property type="entry name" value="GPCR_Rhodpsn_7TM"/>
</dbReference>
<dbReference type="PANTHER" id="PTHR24248">
    <property type="entry name" value="ADRENERGIC RECEPTOR-RELATED G-PROTEIN COUPLED RECEPTOR"/>
    <property type="match status" value="1"/>
</dbReference>
<dbReference type="PANTHER" id="PTHR24248:SF139">
    <property type="entry name" value="D(1A) DOPAMINE RECEPTOR"/>
    <property type="match status" value="1"/>
</dbReference>
<dbReference type="Pfam" id="PF00001">
    <property type="entry name" value="7tm_1"/>
    <property type="match status" value="1"/>
</dbReference>
<dbReference type="PRINTS" id="PR00565">
    <property type="entry name" value="DOPAMINED1AR"/>
</dbReference>
<dbReference type="PRINTS" id="PR00242">
    <property type="entry name" value="DOPAMINER"/>
</dbReference>
<dbReference type="PRINTS" id="PR00237">
    <property type="entry name" value="GPCRRHODOPSN"/>
</dbReference>
<dbReference type="SMART" id="SM01381">
    <property type="entry name" value="7TM_GPCR_Srsx"/>
    <property type="match status" value="1"/>
</dbReference>
<dbReference type="SUPFAM" id="SSF81321">
    <property type="entry name" value="Family A G protein-coupled receptor-like"/>
    <property type="match status" value="1"/>
</dbReference>
<dbReference type="PROSITE" id="PS00237">
    <property type="entry name" value="G_PROTEIN_RECEP_F1_1"/>
    <property type="match status" value="1"/>
</dbReference>
<dbReference type="PROSITE" id="PS50262">
    <property type="entry name" value="G_PROTEIN_RECEP_F1_2"/>
    <property type="match status" value="1"/>
</dbReference>
<proteinExistence type="inferred from homology"/>
<reference key="1">
    <citation type="journal article" date="1992" name="Mol. Pharmacol.">
        <title>Molecular cloning and expression of the rhesus macaque D1 dopamine receptor gene.</title>
        <authorList>
            <person name="Machida C.A."/>
            <person name="Searles R.P."/>
            <person name="Nipper V."/>
            <person name="Brown J.A."/>
            <person name="Kozell L.B."/>
            <person name="Neve K.A."/>
        </authorList>
    </citation>
    <scope>NUCLEOTIDE SEQUENCE [GENOMIC DNA]</scope>
</reference>
<protein>
    <recommendedName>
        <fullName>D(1A) dopamine receptor</fullName>
    </recommendedName>
    <alternativeName>
        <fullName>Dopamine D1 receptor</fullName>
    </alternativeName>
</protein>
<evidence type="ECO:0000250" key="1">
    <source>
        <dbReference type="UniProtKB" id="P18901"/>
    </source>
</evidence>
<evidence type="ECO:0000250" key="2">
    <source>
        <dbReference type="UniProtKB" id="P21728"/>
    </source>
</evidence>
<evidence type="ECO:0000250" key="3">
    <source>
        <dbReference type="UniProtKB" id="Q61616"/>
    </source>
</evidence>
<evidence type="ECO:0000255" key="4"/>
<evidence type="ECO:0000255" key="5">
    <source>
        <dbReference type="PROSITE-ProRule" id="PRU00521"/>
    </source>
</evidence>
<sequence length="446" mass="49292">MRTLNTSAMDGTGLVVERDFSVRILTACFLSLLILSTLLGNTLVCAAVIRFRHLRSKVTNFFVISLAVSDLLVAVLVMPWKAVAEIAGFWPFGSFCNIWVAFDIMCSTASILNLCVISVDRYWAISSPFRYERKMTPKAAFILISVAWTLSVLISFIPVQLSWHKAKPTSPSDGNATSLAETIDNCDSSLSRTYAISSSVISFYIPVAIMIVTYTRIYRIAQKQIRRIAALERAAVHAKNCQTTTGNGKPVECSQPESSFKMSFKRETKVLKTLSVIMGVFVCCWLPFFILNCILPFCGSGETQPFCIDSITFDVFVWFGWANSSLNPIIYAFNADFRKAFSTLLGCYRLCPATNNAIETVSINNNGAAMFSSHHEPRGSISKECNLVYLIPHAVGSSEDLKKEEAAGIARPLEKLSPALSVILDYDTDVSLEKIQPITQNGQHPT</sequence>
<gene>
    <name type="primary">DRD1</name>
</gene>
<name>DRD1_MACMU</name>
<keyword id="KW-1003">Cell membrane</keyword>
<keyword id="KW-0966">Cell projection</keyword>
<keyword id="KW-1015">Disulfide bond</keyword>
<keyword id="KW-0256">Endoplasmic reticulum</keyword>
<keyword id="KW-0297">G-protein coupled receptor</keyword>
<keyword id="KW-0325">Glycoprotein</keyword>
<keyword id="KW-0449">Lipoprotein</keyword>
<keyword id="KW-0472">Membrane</keyword>
<keyword id="KW-0564">Palmitate</keyword>
<keyword id="KW-0675">Receptor</keyword>
<keyword id="KW-1185">Reference proteome</keyword>
<keyword id="KW-0770">Synapse</keyword>
<keyword id="KW-0807">Transducer</keyword>
<keyword id="KW-0812">Transmembrane</keyword>
<keyword id="KW-1133">Transmembrane helix</keyword>
<organism>
    <name type="scientific">Macaca mulatta</name>
    <name type="common">Rhesus macaque</name>
    <dbReference type="NCBI Taxonomy" id="9544"/>
    <lineage>
        <taxon>Eukaryota</taxon>
        <taxon>Metazoa</taxon>
        <taxon>Chordata</taxon>
        <taxon>Craniata</taxon>
        <taxon>Vertebrata</taxon>
        <taxon>Euteleostomi</taxon>
        <taxon>Mammalia</taxon>
        <taxon>Eutheria</taxon>
        <taxon>Euarchontoglires</taxon>
        <taxon>Primates</taxon>
        <taxon>Haplorrhini</taxon>
        <taxon>Catarrhini</taxon>
        <taxon>Cercopithecidae</taxon>
        <taxon>Cercopithecinae</taxon>
        <taxon>Macaca</taxon>
    </lineage>
</organism>